<accession>C5DY71</accession>
<organism>
    <name type="scientific">Zygosaccharomyces rouxii (strain ATCC 2623 / CBS 732 / NBRC 1130 / NCYC 568 / NRRL Y-229)</name>
    <dbReference type="NCBI Taxonomy" id="559307"/>
    <lineage>
        <taxon>Eukaryota</taxon>
        <taxon>Fungi</taxon>
        <taxon>Dikarya</taxon>
        <taxon>Ascomycota</taxon>
        <taxon>Saccharomycotina</taxon>
        <taxon>Saccharomycetes</taxon>
        <taxon>Saccharomycetales</taxon>
        <taxon>Saccharomycetaceae</taxon>
        <taxon>Zygosaccharomyces</taxon>
    </lineage>
</organism>
<comment type="function">
    <text evidence="1">Catalyzes the radical-mediated insertion of two sulfur atoms into the C-6 and C-8 positions of the octanoyl moiety bound to the lipoyl domains of lipoate-dependent enzymes, thereby converting the octanoylated domains into lipoylated derivatives.</text>
</comment>
<comment type="catalytic activity">
    <reaction evidence="1">
        <text>[[Fe-S] cluster scaffold protein carrying a second [4Fe-4S](2+) cluster] + N(6)-octanoyl-L-lysyl-[protein] + 2 oxidized [2Fe-2S]-[ferredoxin] + 2 S-adenosyl-L-methionine + 4 H(+) = [[Fe-S] cluster scaffold protein] + N(6)-[(R)-dihydrolipoyl]-L-lysyl-[protein] + 4 Fe(3+) + 2 hydrogen sulfide + 2 5'-deoxyadenosine + 2 L-methionine + 2 reduced [2Fe-2S]-[ferredoxin]</text>
        <dbReference type="Rhea" id="RHEA:16585"/>
        <dbReference type="Rhea" id="RHEA-COMP:9928"/>
        <dbReference type="Rhea" id="RHEA-COMP:10000"/>
        <dbReference type="Rhea" id="RHEA-COMP:10001"/>
        <dbReference type="Rhea" id="RHEA-COMP:10475"/>
        <dbReference type="Rhea" id="RHEA-COMP:14568"/>
        <dbReference type="Rhea" id="RHEA-COMP:14569"/>
        <dbReference type="ChEBI" id="CHEBI:15378"/>
        <dbReference type="ChEBI" id="CHEBI:17319"/>
        <dbReference type="ChEBI" id="CHEBI:29034"/>
        <dbReference type="ChEBI" id="CHEBI:29919"/>
        <dbReference type="ChEBI" id="CHEBI:33722"/>
        <dbReference type="ChEBI" id="CHEBI:33737"/>
        <dbReference type="ChEBI" id="CHEBI:33738"/>
        <dbReference type="ChEBI" id="CHEBI:57844"/>
        <dbReference type="ChEBI" id="CHEBI:59789"/>
        <dbReference type="ChEBI" id="CHEBI:78809"/>
        <dbReference type="ChEBI" id="CHEBI:83100"/>
        <dbReference type="EC" id="2.8.1.8"/>
    </reaction>
</comment>
<comment type="cofactor">
    <cofactor evidence="1">
        <name>[4Fe-4S] cluster</name>
        <dbReference type="ChEBI" id="CHEBI:49883"/>
    </cofactor>
    <text evidence="1">Binds 2 [4Fe-4S] clusters per subunit. One cluster is coordinated with 3 cysteines and an exchangeable S-adenosyl-L-methionine.</text>
</comment>
<comment type="pathway">
    <text evidence="1">Protein modification; protein lipoylation via endogenous pathway; protein N(6)-(lipoyl)lysine from octanoyl-[acyl-carrier-protein]: step 2/2.</text>
</comment>
<comment type="subcellular location">
    <subcellularLocation>
        <location evidence="1">Mitochondrion</location>
    </subcellularLocation>
</comment>
<comment type="miscellaneous">
    <text evidence="1">This protein may be expected to contain an N-terminal transit peptide but none has been predicted.</text>
</comment>
<comment type="similarity">
    <text evidence="1">Belongs to the radical SAM superfamily. Lipoyl synthase family.</text>
</comment>
<sequence length="386" mass="43530">MIRVRTSLKKCDVSLGLRLISTTRTNPTTPTTPRKRRATVFKDTLNKGPSFEDFVSGRAAEVSLDPLERARSTVEENQRLPKWLKTPIPKGSNFHKLKEDVRDLKLSTVCEEARCPNIGDCWGGNDKSKATATIMLLGDTCTRGCRFCSVKTNRKPGAPDPMEPENTAEAISRWGLGYVVLTTVDRDDLIDGGSHHLAETVRKIKQKAPNTLVETLAGDFRGDFQAVDVMAQSGLDVYAHNLETVESLTPHVRDRRATYRQSLNVLKRAKQTVPTLVTKTSLMLGLGETHEEVIQTLRDLREIKCDVVTFGQYMRPTKRHMKVVEYVTPEKFEFWKEQALEMGFLYCASGPLVRSSYKAGEAFIENVLRKRKPLEQQQESLSAFRI</sequence>
<feature type="chain" id="PRO_0000398297" description="Lipoyl synthase, mitochondrial">
    <location>
        <begin position="1"/>
        <end position="386"/>
    </location>
</feature>
<feature type="domain" description="Radical SAM core" evidence="2">
    <location>
        <begin position="124"/>
        <end position="345"/>
    </location>
</feature>
<feature type="binding site" evidence="1">
    <location>
        <position position="110"/>
    </location>
    <ligand>
        <name>[4Fe-4S] cluster</name>
        <dbReference type="ChEBI" id="CHEBI:49883"/>
        <label>1</label>
    </ligand>
</feature>
<feature type="binding site" evidence="1">
    <location>
        <position position="115"/>
    </location>
    <ligand>
        <name>[4Fe-4S] cluster</name>
        <dbReference type="ChEBI" id="CHEBI:49883"/>
        <label>1</label>
    </ligand>
</feature>
<feature type="binding site" evidence="1">
    <location>
        <position position="121"/>
    </location>
    <ligand>
        <name>[4Fe-4S] cluster</name>
        <dbReference type="ChEBI" id="CHEBI:49883"/>
        <label>1</label>
    </ligand>
</feature>
<feature type="binding site" evidence="1">
    <location>
        <position position="141"/>
    </location>
    <ligand>
        <name>[4Fe-4S] cluster</name>
        <dbReference type="ChEBI" id="CHEBI:49883"/>
        <label>2</label>
        <note>4Fe-4S-S-AdoMet</note>
    </ligand>
</feature>
<feature type="binding site" evidence="1">
    <location>
        <position position="145"/>
    </location>
    <ligand>
        <name>[4Fe-4S] cluster</name>
        <dbReference type="ChEBI" id="CHEBI:49883"/>
        <label>2</label>
        <note>4Fe-4S-S-AdoMet</note>
    </ligand>
</feature>
<feature type="binding site" evidence="1">
    <location>
        <position position="148"/>
    </location>
    <ligand>
        <name>[4Fe-4S] cluster</name>
        <dbReference type="ChEBI" id="CHEBI:49883"/>
        <label>2</label>
        <note>4Fe-4S-S-AdoMet</note>
    </ligand>
</feature>
<feature type="binding site" evidence="1">
    <location>
        <position position="356"/>
    </location>
    <ligand>
        <name>[4Fe-4S] cluster</name>
        <dbReference type="ChEBI" id="CHEBI:49883"/>
        <label>1</label>
    </ligand>
</feature>
<proteinExistence type="inferred from homology"/>
<name>LIPA_ZYGRC</name>
<keyword id="KW-0004">4Fe-4S</keyword>
<keyword id="KW-0408">Iron</keyword>
<keyword id="KW-0411">Iron-sulfur</keyword>
<keyword id="KW-0479">Metal-binding</keyword>
<keyword id="KW-0496">Mitochondrion</keyword>
<keyword id="KW-1185">Reference proteome</keyword>
<keyword id="KW-0949">S-adenosyl-L-methionine</keyword>
<keyword id="KW-0808">Transferase</keyword>
<evidence type="ECO:0000255" key="1">
    <source>
        <dbReference type="HAMAP-Rule" id="MF_03123"/>
    </source>
</evidence>
<evidence type="ECO:0000255" key="2">
    <source>
        <dbReference type="PROSITE-ProRule" id="PRU01266"/>
    </source>
</evidence>
<gene>
    <name type="ordered locus">ZYRO0F10758g</name>
</gene>
<protein>
    <recommendedName>
        <fullName evidence="1">Lipoyl synthase, mitochondrial</fullName>
        <ecNumber evidence="1">2.8.1.8</ecNumber>
    </recommendedName>
    <alternativeName>
        <fullName evidence="1">Lipoate synthase</fullName>
        <shortName evidence="1">LS</shortName>
        <shortName evidence="1">Lip-syn</shortName>
    </alternativeName>
    <alternativeName>
        <fullName evidence="1">Lipoic acid synthase</fullName>
    </alternativeName>
</protein>
<reference key="1">
    <citation type="journal article" date="2009" name="Genome Res.">
        <title>Comparative genomics of protoploid Saccharomycetaceae.</title>
        <authorList>
            <consortium name="The Genolevures Consortium"/>
            <person name="Souciet J.-L."/>
            <person name="Dujon B."/>
            <person name="Gaillardin C."/>
            <person name="Johnston M."/>
            <person name="Baret P.V."/>
            <person name="Cliften P."/>
            <person name="Sherman D.J."/>
            <person name="Weissenbach J."/>
            <person name="Westhof E."/>
            <person name="Wincker P."/>
            <person name="Jubin C."/>
            <person name="Poulain J."/>
            <person name="Barbe V."/>
            <person name="Segurens B."/>
            <person name="Artiguenave F."/>
            <person name="Anthouard V."/>
            <person name="Vacherie B."/>
            <person name="Val M.-E."/>
            <person name="Fulton R.S."/>
            <person name="Minx P."/>
            <person name="Wilson R."/>
            <person name="Durrens P."/>
            <person name="Jean G."/>
            <person name="Marck C."/>
            <person name="Martin T."/>
            <person name="Nikolski M."/>
            <person name="Rolland T."/>
            <person name="Seret M.-L."/>
            <person name="Casaregola S."/>
            <person name="Despons L."/>
            <person name="Fairhead C."/>
            <person name="Fischer G."/>
            <person name="Lafontaine I."/>
            <person name="Leh V."/>
            <person name="Lemaire M."/>
            <person name="de Montigny J."/>
            <person name="Neuveglise C."/>
            <person name="Thierry A."/>
            <person name="Blanc-Lenfle I."/>
            <person name="Bleykasten C."/>
            <person name="Diffels J."/>
            <person name="Fritsch E."/>
            <person name="Frangeul L."/>
            <person name="Goeffon A."/>
            <person name="Jauniaux N."/>
            <person name="Kachouri-Lafond R."/>
            <person name="Payen C."/>
            <person name="Potier S."/>
            <person name="Pribylova L."/>
            <person name="Ozanne C."/>
            <person name="Richard G.-F."/>
            <person name="Sacerdot C."/>
            <person name="Straub M.-L."/>
            <person name="Talla E."/>
        </authorList>
    </citation>
    <scope>NUCLEOTIDE SEQUENCE [LARGE SCALE GENOMIC DNA]</scope>
    <source>
        <strain>ATCC 2623 / CBS 732 / BCRC 21506 / NBRC 1130 / NCYC 568 / NRRL Y-229</strain>
    </source>
</reference>
<dbReference type="EC" id="2.8.1.8" evidence="1"/>
<dbReference type="EMBL" id="CU928178">
    <property type="protein sequence ID" value="CAR28732.1"/>
    <property type="molecule type" value="Genomic_DNA"/>
</dbReference>
<dbReference type="RefSeq" id="XP_002497665.1">
    <property type="nucleotide sequence ID" value="XM_002497620.1"/>
</dbReference>
<dbReference type="SMR" id="C5DY71"/>
<dbReference type="FunCoup" id="C5DY71">
    <property type="interactions" value="625"/>
</dbReference>
<dbReference type="STRING" id="559307.C5DY71"/>
<dbReference type="GeneID" id="8205431"/>
<dbReference type="KEGG" id="zro:ZYRO0F10758g"/>
<dbReference type="HOGENOM" id="CLU_033144_2_0_1"/>
<dbReference type="InParanoid" id="C5DY71"/>
<dbReference type="UniPathway" id="UPA00538">
    <property type="reaction ID" value="UER00593"/>
</dbReference>
<dbReference type="Proteomes" id="UP000008536">
    <property type="component" value="Chromosome F"/>
</dbReference>
<dbReference type="GO" id="GO:0005739">
    <property type="term" value="C:mitochondrion"/>
    <property type="evidence" value="ECO:0007669"/>
    <property type="project" value="UniProtKB-SubCell"/>
</dbReference>
<dbReference type="GO" id="GO:0051539">
    <property type="term" value="F:4 iron, 4 sulfur cluster binding"/>
    <property type="evidence" value="ECO:0007669"/>
    <property type="project" value="UniProtKB-UniRule"/>
</dbReference>
<dbReference type="GO" id="GO:0016992">
    <property type="term" value="F:lipoate synthase activity"/>
    <property type="evidence" value="ECO:0007669"/>
    <property type="project" value="UniProtKB-UniRule"/>
</dbReference>
<dbReference type="GO" id="GO:0046872">
    <property type="term" value="F:metal ion binding"/>
    <property type="evidence" value="ECO:0007669"/>
    <property type="project" value="UniProtKB-KW"/>
</dbReference>
<dbReference type="CDD" id="cd01335">
    <property type="entry name" value="Radical_SAM"/>
    <property type="match status" value="1"/>
</dbReference>
<dbReference type="FunFam" id="3.20.20.70:FF:000036">
    <property type="entry name" value="Lipoyl synthase, mitochondrial"/>
    <property type="match status" value="1"/>
</dbReference>
<dbReference type="Gene3D" id="3.20.20.70">
    <property type="entry name" value="Aldolase class I"/>
    <property type="match status" value="1"/>
</dbReference>
<dbReference type="HAMAP" id="MF_00206">
    <property type="entry name" value="Lipoyl_synth"/>
    <property type="match status" value="1"/>
</dbReference>
<dbReference type="InterPro" id="IPR013785">
    <property type="entry name" value="Aldolase_TIM"/>
</dbReference>
<dbReference type="InterPro" id="IPR006638">
    <property type="entry name" value="Elp3/MiaA/NifB-like_rSAM"/>
</dbReference>
<dbReference type="InterPro" id="IPR031691">
    <property type="entry name" value="LIAS_N"/>
</dbReference>
<dbReference type="InterPro" id="IPR003698">
    <property type="entry name" value="Lipoyl_synth"/>
</dbReference>
<dbReference type="InterPro" id="IPR007197">
    <property type="entry name" value="rSAM"/>
</dbReference>
<dbReference type="NCBIfam" id="TIGR00510">
    <property type="entry name" value="lipA"/>
    <property type="match status" value="1"/>
</dbReference>
<dbReference type="NCBIfam" id="NF004019">
    <property type="entry name" value="PRK05481.1"/>
    <property type="match status" value="1"/>
</dbReference>
<dbReference type="NCBIfam" id="NF009544">
    <property type="entry name" value="PRK12928.1"/>
    <property type="match status" value="1"/>
</dbReference>
<dbReference type="PANTHER" id="PTHR10949">
    <property type="entry name" value="LIPOYL SYNTHASE"/>
    <property type="match status" value="1"/>
</dbReference>
<dbReference type="PANTHER" id="PTHR10949:SF0">
    <property type="entry name" value="LIPOYL SYNTHASE, MITOCHONDRIAL"/>
    <property type="match status" value="1"/>
</dbReference>
<dbReference type="Pfam" id="PF16881">
    <property type="entry name" value="LIAS_N"/>
    <property type="match status" value="1"/>
</dbReference>
<dbReference type="Pfam" id="PF04055">
    <property type="entry name" value="Radical_SAM"/>
    <property type="match status" value="1"/>
</dbReference>
<dbReference type="PIRSF" id="PIRSF005963">
    <property type="entry name" value="Lipoyl_synth"/>
    <property type="match status" value="1"/>
</dbReference>
<dbReference type="SFLD" id="SFLDF00271">
    <property type="entry name" value="lipoyl_synthase"/>
    <property type="match status" value="1"/>
</dbReference>
<dbReference type="SFLD" id="SFLDS00029">
    <property type="entry name" value="Radical_SAM"/>
    <property type="match status" value="1"/>
</dbReference>
<dbReference type="SMART" id="SM00729">
    <property type="entry name" value="Elp3"/>
    <property type="match status" value="1"/>
</dbReference>
<dbReference type="SUPFAM" id="SSF102114">
    <property type="entry name" value="Radical SAM enzymes"/>
    <property type="match status" value="1"/>
</dbReference>
<dbReference type="PROSITE" id="PS51918">
    <property type="entry name" value="RADICAL_SAM"/>
    <property type="match status" value="1"/>
</dbReference>